<evidence type="ECO:0000250" key="1">
    <source>
        <dbReference type="UniProtKB" id="Q12051"/>
    </source>
</evidence>
<evidence type="ECO:0000269" key="2">
    <source>
    </source>
</evidence>
<evidence type="ECO:0000303" key="3">
    <source>
    </source>
</evidence>
<evidence type="ECO:0000305" key="4"/>
<evidence type="ECO:0000305" key="5">
    <source>
    </source>
</evidence>
<accession>A0A0E3D8P4</accession>
<protein>
    <recommendedName>
        <fullName evidence="3">Geranylgeranyl pyrophosphate synthase penG</fullName>
        <shortName evidence="4">GGPP synthase</shortName>
        <shortName evidence="4">GGPPSase</shortName>
        <ecNumber evidence="4">2.5.1.-</ecNumber>
    </recommendedName>
    <alternativeName>
        <fullName evidence="1">(2E,6E)-farnesyl diphosphate synthase</fullName>
    </alternativeName>
    <alternativeName>
        <fullName evidence="1">Dimethylallyltranstransferase</fullName>
        <ecNumber evidence="1">2.5.1.1</ecNumber>
    </alternativeName>
    <alternativeName>
        <fullName evidence="1">Farnesyl diphosphate synthase</fullName>
    </alternativeName>
    <alternativeName>
        <fullName evidence="1">Farnesyltranstransferase</fullName>
        <ecNumber evidence="1">2.5.1.29</ecNumber>
    </alternativeName>
    <alternativeName>
        <fullName evidence="1">Geranylgeranyl diphosphate synthase</fullName>
    </alternativeName>
    <alternativeName>
        <fullName evidence="1">Geranyltranstransferase</fullName>
        <ecNumber evidence="1">2.5.1.10</ecNumber>
    </alternativeName>
    <alternativeName>
        <fullName evidence="3">Penitrem biosynthesis cluster protein G</fullName>
    </alternativeName>
</protein>
<comment type="function">
    <text evidence="2 5">Geranylgeranyl pyrophosphate synthase; part of the gene cluster that mediates the biosynthesis of the indole diterpenes penitrems (PubMed:26213965). The geranylgeranyl diphosphate (GGPP) synthase penG catalyzes the first step in penitrem biosynthesis via conversion of farnesyl pyrophosphate and isopentyl pyrophosphate into geranylgeranyl pyrophosphate (GGPP) (Probable). Condensation of indole-3-glycerol phosphate with GGPP by the prenyl transferase penC then forms 3-geranylgeranylindole (3-GGI) (Probable). Epoxidation by the FAD-dependent monooxygenase penM leads to a epoxidized-GGI that is substrate of the terpene cyclase penB for cyclization to yield paspaline (Probable). Paspaline is subsequently converted to 13-desoxypaxilline by the cytochrome P450 monooxygenase penP, the latter being then converted to paxilline by the cytochrome P450 monooxygenase penQ (PubMed:26213965). Paxilline is converted to beta-paxitriol via C-10 ketoreduction by the short-chain dehydrogenase PC-15 which can be monoprenylated at the C-20 by the indole diterpene prenyltransferase penD (Probable). A two-step elimination (acetylation and elimination) process performed by the O-acetyltransferase PC-16 and the P.simplicissimum ptmI-ortholog not yet identified in P.crustosum, leads to the production of the prenylated form of penijanthine (Probable). The FAD-linked oxidoreductase ptmO then converts the prenylated form of penijanthine into PC-M5 which is in turn transformed into PC-M4 by the aromatic dimethylallyltransferase PC-22 (Probable). A series of oxidation steps involving 4 cytochrome P450 monooxygenases (PC-21, PC-05, PC-23, PC-20) and a FAD-dependent monooxygenase (PC-14) are required for the transformation of PC-M4 to penitrems A and E. Synthesis of these final products is proposed to proceed via penitrems D and C (PC-21, PC-05, PC-14) and penitrems B and F (PC-21, PC-05, PC-14, PC-23) (Probable).</text>
</comment>
<comment type="catalytic activity">
    <reaction evidence="1">
        <text>isopentenyl diphosphate + dimethylallyl diphosphate = (2E)-geranyl diphosphate + diphosphate</text>
        <dbReference type="Rhea" id="RHEA:22408"/>
        <dbReference type="ChEBI" id="CHEBI:33019"/>
        <dbReference type="ChEBI" id="CHEBI:57623"/>
        <dbReference type="ChEBI" id="CHEBI:58057"/>
        <dbReference type="ChEBI" id="CHEBI:128769"/>
        <dbReference type="EC" id="2.5.1.1"/>
    </reaction>
</comment>
<comment type="catalytic activity">
    <reaction evidence="1">
        <text>isopentenyl diphosphate + (2E)-geranyl diphosphate = (2E,6E)-farnesyl diphosphate + diphosphate</text>
        <dbReference type="Rhea" id="RHEA:19361"/>
        <dbReference type="ChEBI" id="CHEBI:33019"/>
        <dbReference type="ChEBI" id="CHEBI:58057"/>
        <dbReference type="ChEBI" id="CHEBI:128769"/>
        <dbReference type="ChEBI" id="CHEBI:175763"/>
        <dbReference type="EC" id="2.5.1.10"/>
    </reaction>
</comment>
<comment type="catalytic activity">
    <reaction evidence="1">
        <text>isopentenyl diphosphate + (2E,6E)-farnesyl diphosphate = (2E,6E,10E)-geranylgeranyl diphosphate + diphosphate</text>
        <dbReference type="Rhea" id="RHEA:17653"/>
        <dbReference type="ChEBI" id="CHEBI:33019"/>
        <dbReference type="ChEBI" id="CHEBI:58756"/>
        <dbReference type="ChEBI" id="CHEBI:128769"/>
        <dbReference type="ChEBI" id="CHEBI:175763"/>
        <dbReference type="EC" id="2.5.1.29"/>
    </reaction>
</comment>
<comment type="cofactor">
    <cofactor evidence="1">
        <name>Mg(2+)</name>
        <dbReference type="ChEBI" id="CHEBI:18420"/>
    </cofactor>
    <text evidence="1">Binds 3 Mg(2+) ions per subunit.</text>
</comment>
<comment type="pathway">
    <text evidence="5">Secondary metabolite biosynthesis.</text>
</comment>
<comment type="similarity">
    <text evidence="4">Belongs to the FPP/GGPP synthase family.</text>
</comment>
<gene>
    <name evidence="3" type="primary">penG</name>
</gene>
<proteinExistence type="inferred from homology"/>
<sequence>MLFLAPGYIFPNVATPVTVAIDFAQAVKQGAYNVLDLKASPIPNPELFQPPSRIIRGPLNYLLSLPGKDIRGKLIDALNEWFRVPEDKLNIIKEIVVILHTASLLIDDIQDSSELRRGNPVAHRIFGVAQTINSANYAYFLAQAKLADLNDSRAFDIFTKGLLKLHRGQGMELYWRDNLICPTEEEYVEMVSCKTGGLFYLAVQLMQLNSEVTVNFSNFINLLGIIFQIRDDYMNLQSGTMTKTKGFSEDLTEGKFGYPIIHSIHAAPNDSQLIQILKLKTKDEVIKQYAVRYIESTGSFVYCREKLDMYLEEANETFRGLEMLLGPSKGIRAILDFLRTR</sequence>
<dbReference type="EC" id="2.5.1.-" evidence="4"/>
<dbReference type="EC" id="2.5.1.1" evidence="1"/>
<dbReference type="EC" id="2.5.1.29" evidence="1"/>
<dbReference type="EC" id="2.5.1.10" evidence="1"/>
<dbReference type="EMBL" id="KC963408">
    <property type="protein sequence ID" value="AGZ20182.1"/>
    <property type="molecule type" value="Genomic_DNA"/>
</dbReference>
<dbReference type="SMR" id="A0A0E3D8P4"/>
<dbReference type="GO" id="GO:0004337">
    <property type="term" value="F:(2E,6E)-farnesyl diphosphate synthase activity"/>
    <property type="evidence" value="ECO:0007669"/>
    <property type="project" value="UniProtKB-EC"/>
</dbReference>
<dbReference type="GO" id="GO:0004161">
    <property type="term" value="F:dimethylallyltranstransferase activity"/>
    <property type="evidence" value="ECO:0007669"/>
    <property type="project" value="UniProtKB-EC"/>
</dbReference>
<dbReference type="GO" id="GO:0004311">
    <property type="term" value="F:geranylgeranyl diphosphate synthase activity"/>
    <property type="evidence" value="ECO:0007669"/>
    <property type="project" value="UniProtKB-EC"/>
</dbReference>
<dbReference type="GO" id="GO:0046872">
    <property type="term" value="F:metal ion binding"/>
    <property type="evidence" value="ECO:0007669"/>
    <property type="project" value="UniProtKB-KW"/>
</dbReference>
<dbReference type="GO" id="GO:0046165">
    <property type="term" value="P:alcohol biosynthetic process"/>
    <property type="evidence" value="ECO:0007669"/>
    <property type="project" value="UniProtKB-ARBA"/>
</dbReference>
<dbReference type="GO" id="GO:0008299">
    <property type="term" value="P:isoprenoid biosynthetic process"/>
    <property type="evidence" value="ECO:0007669"/>
    <property type="project" value="UniProtKB-KW"/>
</dbReference>
<dbReference type="GO" id="GO:0043386">
    <property type="term" value="P:mycotoxin biosynthetic process"/>
    <property type="evidence" value="ECO:0007669"/>
    <property type="project" value="UniProtKB-ARBA"/>
</dbReference>
<dbReference type="CDD" id="cd00685">
    <property type="entry name" value="Trans_IPPS_HT"/>
    <property type="match status" value="1"/>
</dbReference>
<dbReference type="Gene3D" id="1.10.600.10">
    <property type="entry name" value="Farnesyl Diphosphate Synthase"/>
    <property type="match status" value="1"/>
</dbReference>
<dbReference type="InterPro" id="IPR008949">
    <property type="entry name" value="Isoprenoid_synthase_dom_sf"/>
</dbReference>
<dbReference type="InterPro" id="IPR000092">
    <property type="entry name" value="Polyprenyl_synt"/>
</dbReference>
<dbReference type="InterPro" id="IPR033749">
    <property type="entry name" value="Polyprenyl_synt_CS"/>
</dbReference>
<dbReference type="PANTHER" id="PTHR12001">
    <property type="entry name" value="GERANYLGERANYL PYROPHOSPHATE SYNTHASE"/>
    <property type="match status" value="1"/>
</dbReference>
<dbReference type="PANTHER" id="PTHR12001:SF70">
    <property type="entry name" value="PYROPHOSPHATE SYNTHETASE ATMG, PUTATIVE (AFU_ORTHOLOGUE AFUA_8G02400)-RELATED"/>
    <property type="match status" value="1"/>
</dbReference>
<dbReference type="Pfam" id="PF00348">
    <property type="entry name" value="polyprenyl_synt"/>
    <property type="match status" value="1"/>
</dbReference>
<dbReference type="SFLD" id="SFLDS00005">
    <property type="entry name" value="Isoprenoid_Synthase_Type_I"/>
    <property type="match status" value="1"/>
</dbReference>
<dbReference type="SUPFAM" id="SSF48576">
    <property type="entry name" value="Terpenoid synthases"/>
    <property type="match status" value="1"/>
</dbReference>
<dbReference type="PROSITE" id="PS00723">
    <property type="entry name" value="POLYPRENYL_SYNTHASE_1"/>
    <property type="match status" value="1"/>
</dbReference>
<dbReference type="PROSITE" id="PS00444">
    <property type="entry name" value="POLYPRENYL_SYNTHASE_2"/>
    <property type="match status" value="1"/>
</dbReference>
<keyword id="KW-0414">Isoprene biosynthesis</keyword>
<keyword id="KW-0460">Magnesium</keyword>
<keyword id="KW-0479">Metal-binding</keyword>
<keyword id="KW-0808">Transferase</keyword>
<reference key="1">
    <citation type="journal article" date="2015" name="Toxins">
        <title>Molecular cloning and functional analysis of gene clusters for the biosynthesis of indole-diterpenes in Penicillium crustosum and P. janthinellum.</title>
        <authorList>
            <person name="Nicholson M.J."/>
            <person name="Eaton C.J."/>
            <person name="Starkel C."/>
            <person name="Tapper B.A."/>
            <person name="Cox M.P."/>
            <person name="Scott B."/>
        </authorList>
    </citation>
    <scope>NUCLEOTIDE SEQUENCE [GENOMIC DNA]</scope>
    <scope>IDENTIFICATION</scope>
    <scope>FUNCTION</scope>
    <scope>PATHWAY</scope>
    <source>
        <strain>PN2402</strain>
    </source>
</reference>
<name>PENG_PENCR</name>
<organism>
    <name type="scientific">Penicillium crustosum</name>
    <name type="common">Blue mold fungus</name>
    <dbReference type="NCBI Taxonomy" id="36656"/>
    <lineage>
        <taxon>Eukaryota</taxon>
        <taxon>Fungi</taxon>
        <taxon>Dikarya</taxon>
        <taxon>Ascomycota</taxon>
        <taxon>Pezizomycotina</taxon>
        <taxon>Eurotiomycetes</taxon>
        <taxon>Eurotiomycetidae</taxon>
        <taxon>Eurotiales</taxon>
        <taxon>Aspergillaceae</taxon>
        <taxon>Penicillium</taxon>
    </lineage>
</organism>
<feature type="chain" id="PRO_0000446552" description="Geranylgeranyl pyrophosphate synthase penG">
    <location>
        <begin position="1"/>
        <end position="341"/>
    </location>
</feature>
<feature type="binding site" evidence="1">
    <location>
        <position position="68"/>
    </location>
    <ligand>
        <name>isopentenyl diphosphate</name>
        <dbReference type="ChEBI" id="CHEBI:128769"/>
    </ligand>
</feature>
<feature type="binding site" evidence="1">
    <location>
        <position position="71"/>
    </location>
    <ligand>
        <name>isopentenyl diphosphate</name>
        <dbReference type="ChEBI" id="CHEBI:128769"/>
    </ligand>
</feature>
<feature type="binding site" evidence="1">
    <location>
        <position position="100"/>
    </location>
    <ligand>
        <name>isopentenyl diphosphate</name>
        <dbReference type="ChEBI" id="CHEBI:128769"/>
    </ligand>
</feature>
<feature type="binding site" evidence="1">
    <location>
        <position position="107"/>
    </location>
    <ligand>
        <name>Mg(2+)</name>
        <dbReference type="ChEBI" id="CHEBI:18420"/>
        <label>1</label>
    </ligand>
</feature>
<feature type="binding site" evidence="1">
    <location>
        <position position="107"/>
    </location>
    <ligand>
        <name>Mg(2+)</name>
        <dbReference type="ChEBI" id="CHEBI:18420"/>
        <label>2</label>
    </ligand>
</feature>
<feature type="binding site" evidence="1">
    <location>
        <position position="111"/>
    </location>
    <ligand>
        <name>Mg(2+)</name>
        <dbReference type="ChEBI" id="CHEBI:18420"/>
        <label>1</label>
    </ligand>
</feature>
<feature type="binding site" evidence="1">
    <location>
        <position position="111"/>
    </location>
    <ligand>
        <name>Mg(2+)</name>
        <dbReference type="ChEBI" id="CHEBI:18420"/>
        <label>2</label>
    </ligand>
</feature>
<feature type="binding site" evidence="1">
    <location>
        <position position="116"/>
    </location>
    <ligand>
        <name>dimethylallyl diphosphate</name>
        <dbReference type="ChEBI" id="CHEBI:57623"/>
    </ligand>
</feature>
<feature type="binding site" evidence="1">
    <location>
        <position position="117"/>
    </location>
    <ligand>
        <name>isopentenyl diphosphate</name>
        <dbReference type="ChEBI" id="CHEBI:128769"/>
    </ligand>
</feature>
<feature type="binding site" evidence="1">
    <location>
        <position position="194"/>
    </location>
    <ligand>
        <name>dimethylallyl diphosphate</name>
        <dbReference type="ChEBI" id="CHEBI:57623"/>
    </ligand>
</feature>
<feature type="binding site" evidence="1">
    <location>
        <position position="195"/>
    </location>
    <ligand>
        <name>dimethylallyl diphosphate</name>
        <dbReference type="ChEBI" id="CHEBI:57623"/>
    </ligand>
</feature>
<feature type="binding site" evidence="1">
    <location>
        <position position="228"/>
    </location>
    <ligand>
        <name>dimethylallyl diphosphate</name>
        <dbReference type="ChEBI" id="CHEBI:57623"/>
    </ligand>
</feature>
<feature type="binding site" evidence="1">
    <location>
        <position position="231"/>
    </location>
    <ligand>
        <name>Mg(2+)</name>
        <dbReference type="ChEBI" id="CHEBI:18420"/>
        <label>3</label>
    </ligand>
</feature>
<feature type="binding site" evidence="1">
    <location>
        <position position="235"/>
    </location>
    <ligand>
        <name>dimethylallyl diphosphate</name>
        <dbReference type="ChEBI" id="CHEBI:57623"/>
    </ligand>
</feature>
<feature type="binding site" evidence="1">
    <location>
        <position position="245"/>
    </location>
    <ligand>
        <name>dimethylallyl diphosphate</name>
        <dbReference type="ChEBI" id="CHEBI:57623"/>
    </ligand>
</feature>
<feature type="binding site" evidence="1">
    <location>
        <position position="255"/>
    </location>
    <ligand>
        <name>dimethylallyl diphosphate</name>
        <dbReference type="ChEBI" id="CHEBI:57623"/>
    </ligand>
</feature>
<feature type="site" description="Important for determining product chain length" evidence="1">
    <location>
        <position position="139"/>
    </location>
</feature>